<proteinExistence type="inferred from homology"/>
<protein>
    <recommendedName>
        <fullName evidence="1">1-(5-phosphoribosyl)-5-[(5-phosphoribosylamino)methylideneamino] imidazole-4-carboxamide isomerase</fullName>
        <ecNumber evidence="1">5.3.1.16</ecNumber>
    </recommendedName>
    <alternativeName>
        <fullName evidence="1">Phosphoribosylformimino-5-aminoimidazole carboxamide ribotide isomerase</fullName>
    </alternativeName>
</protein>
<gene>
    <name evidence="1" type="primary">hisA</name>
    <name type="ordered locus">Dgeo_2158</name>
</gene>
<comment type="catalytic activity">
    <reaction evidence="1">
        <text>1-(5-phospho-beta-D-ribosyl)-5-[(5-phospho-beta-D-ribosylamino)methylideneamino]imidazole-4-carboxamide = 5-[(5-phospho-1-deoxy-D-ribulos-1-ylimino)methylamino]-1-(5-phospho-beta-D-ribosyl)imidazole-4-carboxamide</text>
        <dbReference type="Rhea" id="RHEA:15469"/>
        <dbReference type="ChEBI" id="CHEBI:58435"/>
        <dbReference type="ChEBI" id="CHEBI:58525"/>
        <dbReference type="EC" id="5.3.1.16"/>
    </reaction>
</comment>
<comment type="pathway">
    <text evidence="1">Amino-acid biosynthesis; L-histidine biosynthesis; L-histidine from 5-phospho-alpha-D-ribose 1-diphosphate: step 4/9.</text>
</comment>
<comment type="subcellular location">
    <subcellularLocation>
        <location evidence="1">Cytoplasm</location>
    </subcellularLocation>
</comment>
<comment type="similarity">
    <text evidence="1">Belongs to the HisA/HisF family.</text>
</comment>
<keyword id="KW-0028">Amino-acid biosynthesis</keyword>
<keyword id="KW-0963">Cytoplasm</keyword>
<keyword id="KW-0368">Histidine biosynthesis</keyword>
<keyword id="KW-0413">Isomerase</keyword>
<sequence length="243" mass="25475">MTPVSSRLQPLIIPCVDIQSGRAVRLYEGDPDRETVYFESPLEAARHWAALGAGLVHLVDLDAATGRGENRAVITQITAELGVPVEVGGGIRDRAAAEALLDAGVGRVVIGTAAVKNPALVRELIAAHGPSRVVVSLDARGLDVAIHGWAEGSGVSVAELAPLLAEAGLETLIFTDVTRDGTLRGLDRDLMRQVRQLWSNTLIVGGGVATLDDVRLLAEEGIQGAIVGRAIYEGTLVYPVTGL</sequence>
<dbReference type="EC" id="5.3.1.16" evidence="1"/>
<dbReference type="EMBL" id="CP000359">
    <property type="protein sequence ID" value="ABF46452.1"/>
    <property type="molecule type" value="Genomic_DNA"/>
</dbReference>
<dbReference type="RefSeq" id="WP_011531277.1">
    <property type="nucleotide sequence ID" value="NC_008025.1"/>
</dbReference>
<dbReference type="SMR" id="Q1IWD2"/>
<dbReference type="STRING" id="319795.Dgeo_2158"/>
<dbReference type="KEGG" id="dge:Dgeo_2158"/>
<dbReference type="eggNOG" id="COG0106">
    <property type="taxonomic scope" value="Bacteria"/>
</dbReference>
<dbReference type="HOGENOM" id="CLU_048577_1_1_0"/>
<dbReference type="UniPathway" id="UPA00031">
    <property type="reaction ID" value="UER00009"/>
</dbReference>
<dbReference type="Proteomes" id="UP000002431">
    <property type="component" value="Chromosome"/>
</dbReference>
<dbReference type="GO" id="GO:0005737">
    <property type="term" value="C:cytoplasm"/>
    <property type="evidence" value="ECO:0007669"/>
    <property type="project" value="UniProtKB-SubCell"/>
</dbReference>
<dbReference type="GO" id="GO:0003949">
    <property type="term" value="F:1-(5-phosphoribosyl)-5-[(5-phosphoribosylamino)methylideneamino]imidazole-4-carboxamide isomerase activity"/>
    <property type="evidence" value="ECO:0007669"/>
    <property type="project" value="UniProtKB-UniRule"/>
</dbReference>
<dbReference type="GO" id="GO:0000105">
    <property type="term" value="P:L-histidine biosynthetic process"/>
    <property type="evidence" value="ECO:0007669"/>
    <property type="project" value="UniProtKB-UniRule"/>
</dbReference>
<dbReference type="GO" id="GO:0000162">
    <property type="term" value="P:L-tryptophan biosynthetic process"/>
    <property type="evidence" value="ECO:0007669"/>
    <property type="project" value="TreeGrafter"/>
</dbReference>
<dbReference type="CDD" id="cd04732">
    <property type="entry name" value="HisA"/>
    <property type="match status" value="1"/>
</dbReference>
<dbReference type="FunFam" id="3.20.20.70:FF:000009">
    <property type="entry name" value="1-(5-phosphoribosyl)-5-[(5-phosphoribosylamino)methylideneamino] imidazole-4-carboxamide isomerase"/>
    <property type="match status" value="1"/>
</dbReference>
<dbReference type="Gene3D" id="3.20.20.70">
    <property type="entry name" value="Aldolase class I"/>
    <property type="match status" value="1"/>
</dbReference>
<dbReference type="HAMAP" id="MF_01014">
    <property type="entry name" value="HisA"/>
    <property type="match status" value="1"/>
</dbReference>
<dbReference type="InterPro" id="IPR013785">
    <property type="entry name" value="Aldolase_TIM"/>
</dbReference>
<dbReference type="InterPro" id="IPR006062">
    <property type="entry name" value="His_biosynth"/>
</dbReference>
<dbReference type="InterPro" id="IPR006063">
    <property type="entry name" value="HisA_bact_arch"/>
</dbReference>
<dbReference type="InterPro" id="IPR044524">
    <property type="entry name" value="Isoase_HisA-like"/>
</dbReference>
<dbReference type="InterPro" id="IPR023016">
    <property type="entry name" value="Isoase_HisA-like_bact"/>
</dbReference>
<dbReference type="InterPro" id="IPR011060">
    <property type="entry name" value="RibuloseP-bd_barrel"/>
</dbReference>
<dbReference type="NCBIfam" id="TIGR00007">
    <property type="entry name" value="1-(5-phosphoribosyl)-5-[(5-phosphoribosylamino)methylideneamino]imidazole-4-carboxamide isomerase"/>
    <property type="match status" value="1"/>
</dbReference>
<dbReference type="PANTHER" id="PTHR43090">
    <property type="entry name" value="1-(5-PHOSPHORIBOSYL)-5-[(5-PHOSPHORIBOSYLAMINO)METHYLIDENEAMINO] IMIDAZOLE-4-CARBOXAMIDE ISOMERASE"/>
    <property type="match status" value="1"/>
</dbReference>
<dbReference type="PANTHER" id="PTHR43090:SF2">
    <property type="entry name" value="1-(5-PHOSPHORIBOSYL)-5-[(5-PHOSPHORIBOSYLAMINO)METHYLIDENEAMINO] IMIDAZOLE-4-CARBOXAMIDE ISOMERASE"/>
    <property type="match status" value="1"/>
</dbReference>
<dbReference type="Pfam" id="PF00977">
    <property type="entry name" value="His_biosynth"/>
    <property type="match status" value="1"/>
</dbReference>
<dbReference type="SUPFAM" id="SSF51366">
    <property type="entry name" value="Ribulose-phoshate binding barrel"/>
    <property type="match status" value="1"/>
</dbReference>
<name>HIS4_DEIGD</name>
<accession>Q1IWD2</accession>
<reference key="1">
    <citation type="submission" date="2006-04" db="EMBL/GenBank/DDBJ databases">
        <title>Complete sequence of chromosome of Deinococcus geothermalis DSM 11300.</title>
        <authorList>
            <person name="Copeland A."/>
            <person name="Lucas S."/>
            <person name="Lapidus A."/>
            <person name="Barry K."/>
            <person name="Detter J.C."/>
            <person name="Glavina del Rio T."/>
            <person name="Hammon N."/>
            <person name="Israni S."/>
            <person name="Dalin E."/>
            <person name="Tice H."/>
            <person name="Pitluck S."/>
            <person name="Brettin T."/>
            <person name="Bruce D."/>
            <person name="Han C."/>
            <person name="Tapia R."/>
            <person name="Saunders E."/>
            <person name="Gilna P."/>
            <person name="Schmutz J."/>
            <person name="Larimer F."/>
            <person name="Land M."/>
            <person name="Hauser L."/>
            <person name="Kyrpides N."/>
            <person name="Kim E."/>
            <person name="Daly M.J."/>
            <person name="Fredrickson J.K."/>
            <person name="Makarova K.S."/>
            <person name="Gaidamakova E.K."/>
            <person name="Zhai M."/>
            <person name="Richardson P."/>
        </authorList>
    </citation>
    <scope>NUCLEOTIDE SEQUENCE [LARGE SCALE GENOMIC DNA]</scope>
    <source>
        <strain>DSM 11300 / CIP 105573 / AG-3a</strain>
    </source>
</reference>
<organism>
    <name type="scientific">Deinococcus geothermalis (strain DSM 11300 / CIP 105573 / AG-3a)</name>
    <dbReference type="NCBI Taxonomy" id="319795"/>
    <lineage>
        <taxon>Bacteria</taxon>
        <taxon>Thermotogati</taxon>
        <taxon>Deinococcota</taxon>
        <taxon>Deinococci</taxon>
        <taxon>Deinococcales</taxon>
        <taxon>Deinococcaceae</taxon>
        <taxon>Deinococcus</taxon>
    </lineage>
</organism>
<evidence type="ECO:0000255" key="1">
    <source>
        <dbReference type="HAMAP-Rule" id="MF_01014"/>
    </source>
</evidence>
<feature type="chain" id="PRO_0000290468" description="1-(5-phosphoribosyl)-5-[(5-phosphoribosylamino)methylideneamino] imidazole-4-carboxamide isomerase">
    <location>
        <begin position="1"/>
        <end position="243"/>
    </location>
</feature>
<feature type="active site" description="Proton acceptor" evidence="1">
    <location>
        <position position="17"/>
    </location>
</feature>
<feature type="active site" description="Proton donor" evidence="1">
    <location>
        <position position="138"/>
    </location>
</feature>